<organism>
    <name type="scientific">Escherichia coli O1:K1 / APEC</name>
    <dbReference type="NCBI Taxonomy" id="405955"/>
    <lineage>
        <taxon>Bacteria</taxon>
        <taxon>Pseudomonadati</taxon>
        <taxon>Pseudomonadota</taxon>
        <taxon>Gammaproteobacteria</taxon>
        <taxon>Enterobacterales</taxon>
        <taxon>Enterobacteriaceae</taxon>
        <taxon>Escherichia</taxon>
    </lineage>
</organism>
<dbReference type="EMBL" id="CP000468">
    <property type="protein sequence ID" value="ABJ01276.1"/>
    <property type="molecule type" value="Genomic_DNA"/>
</dbReference>
<dbReference type="RefSeq" id="WP_001274301.1">
    <property type="nucleotide sequence ID" value="NZ_CADILS010000066.1"/>
</dbReference>
<dbReference type="SMR" id="A1AC86"/>
<dbReference type="KEGG" id="ecv:APECO1_976"/>
<dbReference type="HOGENOM" id="CLU_147249_0_2_6"/>
<dbReference type="Proteomes" id="UP000008216">
    <property type="component" value="Chromosome"/>
</dbReference>
<dbReference type="GO" id="GO:0009425">
    <property type="term" value="C:bacterial-type flagellum basal body"/>
    <property type="evidence" value="ECO:0007669"/>
    <property type="project" value="UniProtKB-SubCell"/>
</dbReference>
<dbReference type="GO" id="GO:0003774">
    <property type="term" value="F:cytoskeletal motor activity"/>
    <property type="evidence" value="ECO:0007669"/>
    <property type="project" value="InterPro"/>
</dbReference>
<dbReference type="GO" id="GO:0005198">
    <property type="term" value="F:structural molecule activity"/>
    <property type="evidence" value="ECO:0007669"/>
    <property type="project" value="InterPro"/>
</dbReference>
<dbReference type="GO" id="GO:0071973">
    <property type="term" value="P:bacterial-type flagellum-dependent cell motility"/>
    <property type="evidence" value="ECO:0007669"/>
    <property type="project" value="InterPro"/>
</dbReference>
<dbReference type="HAMAP" id="MF_00724">
    <property type="entry name" value="FliE"/>
    <property type="match status" value="1"/>
</dbReference>
<dbReference type="InterPro" id="IPR001624">
    <property type="entry name" value="FliE"/>
</dbReference>
<dbReference type="NCBIfam" id="TIGR00205">
    <property type="entry name" value="fliE"/>
    <property type="match status" value="1"/>
</dbReference>
<dbReference type="PANTHER" id="PTHR34653">
    <property type="match status" value="1"/>
</dbReference>
<dbReference type="PANTHER" id="PTHR34653:SF1">
    <property type="entry name" value="FLAGELLAR HOOK-BASAL BODY COMPLEX PROTEIN FLIE"/>
    <property type="match status" value="1"/>
</dbReference>
<dbReference type="Pfam" id="PF02049">
    <property type="entry name" value="FliE"/>
    <property type="match status" value="1"/>
</dbReference>
<dbReference type="PRINTS" id="PR01006">
    <property type="entry name" value="FLGHOOKFLIE"/>
</dbReference>
<sequence length="104" mass="11155">MSAIQGIEGVISQLQATAMSARAQESLPQPTISFAGQLHAALDRISDTQTVARTQAEKFTLGEPGVALNDVMTDMQKASVSMQMGIQVRNKLVAAYQEVMSMQV</sequence>
<evidence type="ECO:0000255" key="1">
    <source>
        <dbReference type="HAMAP-Rule" id="MF_00724"/>
    </source>
</evidence>
<keyword id="KW-0975">Bacterial flagellum</keyword>
<keyword id="KW-1185">Reference proteome</keyword>
<name>FLIE_ECOK1</name>
<proteinExistence type="inferred from homology"/>
<accession>A1AC86</accession>
<comment type="subcellular location">
    <subcellularLocation>
        <location evidence="1">Bacterial flagellum basal body</location>
    </subcellularLocation>
</comment>
<comment type="similarity">
    <text evidence="1">Belongs to the FliE family.</text>
</comment>
<protein>
    <recommendedName>
        <fullName evidence="1">Flagellar hook-basal body complex protein FliE</fullName>
    </recommendedName>
</protein>
<gene>
    <name evidence="1" type="primary">fliE</name>
    <name type="ordered locus">Ecok1_17820</name>
    <name type="ORF">APECO1_976</name>
</gene>
<reference key="1">
    <citation type="journal article" date="2007" name="J. Bacteriol.">
        <title>The genome sequence of avian pathogenic Escherichia coli strain O1:K1:H7 shares strong similarities with human extraintestinal pathogenic E. coli genomes.</title>
        <authorList>
            <person name="Johnson T.J."/>
            <person name="Kariyawasam S."/>
            <person name="Wannemuehler Y."/>
            <person name="Mangiamele P."/>
            <person name="Johnson S.J."/>
            <person name="Doetkott C."/>
            <person name="Skyberg J.A."/>
            <person name="Lynne A.M."/>
            <person name="Johnson J.R."/>
            <person name="Nolan L.K."/>
        </authorList>
    </citation>
    <scope>NUCLEOTIDE SEQUENCE [LARGE SCALE GENOMIC DNA]</scope>
</reference>
<feature type="chain" id="PRO_1000045853" description="Flagellar hook-basal body complex protein FliE">
    <location>
        <begin position="1"/>
        <end position="104"/>
    </location>
</feature>